<organism>
    <name type="scientific">Buchnera aphidicola subsp. Baizongia pistaciae (strain Bp)</name>
    <dbReference type="NCBI Taxonomy" id="224915"/>
    <lineage>
        <taxon>Bacteria</taxon>
        <taxon>Pseudomonadati</taxon>
        <taxon>Pseudomonadota</taxon>
        <taxon>Gammaproteobacteria</taxon>
        <taxon>Enterobacterales</taxon>
        <taxon>Erwiniaceae</taxon>
        <taxon>Buchnera</taxon>
    </lineage>
</organism>
<accession>Q89AQ6</accession>
<evidence type="ECO:0000255" key="1">
    <source>
        <dbReference type="HAMAP-Rule" id="MF_01380"/>
    </source>
</evidence>
<comment type="function">
    <text evidence="1">Required for insertion of 4Fe-4S clusters for at least IspG.</text>
</comment>
<comment type="cofactor">
    <cofactor evidence="1">
        <name>iron-sulfur cluster</name>
        <dbReference type="ChEBI" id="CHEBI:30408"/>
    </cofactor>
    <text evidence="1">Binds 1 iron-sulfur cluster per subunit.</text>
</comment>
<comment type="subunit">
    <text evidence="1">Homodimer.</text>
</comment>
<comment type="similarity">
    <text evidence="1">Belongs to the HesB/IscA family.</text>
</comment>
<name>ERPA_BUCBP</name>
<feature type="chain" id="PRO_0000077017" description="Iron-sulfur cluster insertion protein ErpA">
    <location>
        <begin position="1"/>
        <end position="115"/>
    </location>
</feature>
<feature type="binding site" evidence="1">
    <location>
        <position position="43"/>
    </location>
    <ligand>
        <name>iron-sulfur cluster</name>
        <dbReference type="ChEBI" id="CHEBI:30408"/>
    </ligand>
</feature>
<feature type="binding site" evidence="1">
    <location>
        <position position="107"/>
    </location>
    <ligand>
        <name>iron-sulfur cluster</name>
        <dbReference type="ChEBI" id="CHEBI:30408"/>
    </ligand>
</feature>
<feature type="binding site" evidence="1">
    <location>
        <position position="109"/>
    </location>
    <ligand>
        <name>iron-sulfur cluster</name>
        <dbReference type="ChEBI" id="CHEBI:30408"/>
    </ligand>
</feature>
<reference key="1">
    <citation type="journal article" date="2003" name="Proc. Natl. Acad. Sci. U.S.A.">
        <title>Reductive genome evolution in Buchnera aphidicola.</title>
        <authorList>
            <person name="van Ham R.C.H.J."/>
            <person name="Kamerbeek J."/>
            <person name="Palacios C."/>
            <person name="Rausell C."/>
            <person name="Abascal F."/>
            <person name="Bastolla U."/>
            <person name="Fernandez J.M."/>
            <person name="Jimenez L."/>
            <person name="Postigo M."/>
            <person name="Silva F.J."/>
            <person name="Tamames J."/>
            <person name="Viguera E."/>
            <person name="Latorre A."/>
            <person name="Valencia A."/>
            <person name="Moran F."/>
            <person name="Moya A."/>
        </authorList>
    </citation>
    <scope>NUCLEOTIDE SEQUENCE [LARGE SCALE GENOMIC DNA]</scope>
    <source>
        <strain>Bp</strain>
    </source>
</reference>
<keyword id="KW-0408">Iron</keyword>
<keyword id="KW-0411">Iron-sulfur</keyword>
<keyword id="KW-0479">Metal-binding</keyword>
<keyword id="KW-1185">Reference proteome</keyword>
<proteinExistence type="inferred from homology"/>
<protein>
    <recommendedName>
        <fullName evidence="1">Iron-sulfur cluster insertion protein ErpA</fullName>
    </recommendedName>
</protein>
<sequence length="115" mass="12941">MKNNISKFPLSFSKSAIKKIKTIISEKNIPNLKFRVYIAGGGCSGFQYKFKFDKNKNKNDTIVNIFNNIIIIDPISLQYLRGGQIDYIENLEGSKFIILNPKAKHTCGCGSSFSI</sequence>
<dbReference type="EMBL" id="AE016826">
    <property type="protein sequence ID" value="AAO26925.1"/>
    <property type="molecule type" value="Genomic_DNA"/>
</dbReference>
<dbReference type="RefSeq" id="WP_011091326.1">
    <property type="nucleotide sequence ID" value="NC_004545.1"/>
</dbReference>
<dbReference type="SMR" id="Q89AQ6"/>
<dbReference type="STRING" id="224915.bbp_193"/>
<dbReference type="KEGG" id="bab:bbp_193"/>
<dbReference type="eggNOG" id="COG0316">
    <property type="taxonomic scope" value="Bacteria"/>
</dbReference>
<dbReference type="HOGENOM" id="CLU_069054_5_3_6"/>
<dbReference type="OrthoDB" id="9801228at2"/>
<dbReference type="Proteomes" id="UP000000601">
    <property type="component" value="Chromosome"/>
</dbReference>
<dbReference type="GO" id="GO:0005829">
    <property type="term" value="C:cytosol"/>
    <property type="evidence" value="ECO:0007669"/>
    <property type="project" value="TreeGrafter"/>
</dbReference>
<dbReference type="GO" id="GO:0051537">
    <property type="term" value="F:2 iron, 2 sulfur cluster binding"/>
    <property type="evidence" value="ECO:0007669"/>
    <property type="project" value="TreeGrafter"/>
</dbReference>
<dbReference type="GO" id="GO:0051539">
    <property type="term" value="F:4 iron, 4 sulfur cluster binding"/>
    <property type="evidence" value="ECO:0007669"/>
    <property type="project" value="TreeGrafter"/>
</dbReference>
<dbReference type="GO" id="GO:0005506">
    <property type="term" value="F:iron ion binding"/>
    <property type="evidence" value="ECO:0007669"/>
    <property type="project" value="UniProtKB-UniRule"/>
</dbReference>
<dbReference type="GO" id="GO:0016226">
    <property type="term" value="P:iron-sulfur cluster assembly"/>
    <property type="evidence" value="ECO:0007669"/>
    <property type="project" value="UniProtKB-UniRule"/>
</dbReference>
<dbReference type="Gene3D" id="2.60.300.12">
    <property type="entry name" value="HesB-like domain"/>
    <property type="match status" value="1"/>
</dbReference>
<dbReference type="HAMAP" id="MF_01380">
    <property type="entry name" value="Fe_S_insert_ErpA"/>
    <property type="match status" value="1"/>
</dbReference>
<dbReference type="InterPro" id="IPR000361">
    <property type="entry name" value="FeS_biogenesis"/>
</dbReference>
<dbReference type="InterPro" id="IPR016092">
    <property type="entry name" value="FeS_cluster_insertion"/>
</dbReference>
<dbReference type="InterPro" id="IPR017870">
    <property type="entry name" value="FeS_cluster_insertion_CS"/>
</dbReference>
<dbReference type="InterPro" id="IPR023063">
    <property type="entry name" value="FeS_cluster_insertion_RrpA"/>
</dbReference>
<dbReference type="InterPro" id="IPR035903">
    <property type="entry name" value="HesB-like_dom_sf"/>
</dbReference>
<dbReference type="NCBIfam" id="TIGR00049">
    <property type="entry name" value="iron-sulfur cluster assembly accessory protein"/>
    <property type="match status" value="1"/>
</dbReference>
<dbReference type="NCBIfam" id="NF010147">
    <property type="entry name" value="PRK13623.1"/>
    <property type="match status" value="1"/>
</dbReference>
<dbReference type="PANTHER" id="PTHR43011">
    <property type="entry name" value="IRON-SULFUR CLUSTER ASSEMBLY 2 HOMOLOG, MITOCHONDRIAL"/>
    <property type="match status" value="1"/>
</dbReference>
<dbReference type="PANTHER" id="PTHR43011:SF1">
    <property type="entry name" value="IRON-SULFUR CLUSTER ASSEMBLY 2 HOMOLOG, MITOCHONDRIAL"/>
    <property type="match status" value="1"/>
</dbReference>
<dbReference type="Pfam" id="PF01521">
    <property type="entry name" value="Fe-S_biosyn"/>
    <property type="match status" value="1"/>
</dbReference>
<dbReference type="SUPFAM" id="SSF89360">
    <property type="entry name" value="HesB-like domain"/>
    <property type="match status" value="1"/>
</dbReference>
<dbReference type="PROSITE" id="PS01152">
    <property type="entry name" value="HESB"/>
    <property type="match status" value="1"/>
</dbReference>
<gene>
    <name evidence="1" type="primary">erpA</name>
    <name type="ordered locus">bbp_193</name>
</gene>